<gene>
    <name evidence="4" type="primary">thaF</name>
    <name type="ordered locus">BTH_II1675</name>
</gene>
<name>THAF_BURTA</name>
<organism>
    <name type="scientific">Burkholderia thailandensis (strain ATCC 700388 / DSM 13276 / CCUG 48851 / CIP 106301 / E264)</name>
    <dbReference type="NCBI Taxonomy" id="271848"/>
    <lineage>
        <taxon>Bacteria</taxon>
        <taxon>Pseudomonadati</taxon>
        <taxon>Pseudomonadota</taxon>
        <taxon>Betaproteobacteria</taxon>
        <taxon>Burkholderiales</taxon>
        <taxon>Burkholderiaceae</taxon>
        <taxon>Burkholderia</taxon>
        <taxon>pseudomallei group</taxon>
    </lineage>
</organism>
<keyword id="KW-0012">Acyltransferase</keyword>
<keyword id="KW-0045">Antibiotic biosynthesis</keyword>
<keyword id="KW-0963">Cytoplasm</keyword>
<keyword id="KW-0808">Transferase</keyword>
<accession>Q2T4N0</accession>
<proteinExistence type="inferred from homology"/>
<evidence type="ECO:0000250" key="1">
    <source>
        <dbReference type="UniProtKB" id="O34787"/>
    </source>
</evidence>
<evidence type="ECO:0000256" key="2">
    <source>
        <dbReference type="SAM" id="MobiDB-lite"/>
    </source>
</evidence>
<evidence type="ECO:0000269" key="3">
    <source>
    </source>
</evidence>
<evidence type="ECO:0000303" key="4">
    <source>
    </source>
</evidence>
<evidence type="ECO:0000305" key="5"/>
<evidence type="ECO:0000305" key="6">
    <source>
    </source>
</evidence>
<reference key="1">
    <citation type="journal article" date="2005" name="BMC Genomics">
        <title>Bacterial genome adaptation to niches: divergence of the potential virulence genes in three Burkholderia species of different survival strategies.</title>
        <authorList>
            <person name="Kim H.S."/>
            <person name="Schell M.A."/>
            <person name="Yu Y."/>
            <person name="Ulrich R.L."/>
            <person name="Sarria S.H."/>
            <person name="Nierman W.C."/>
            <person name="DeShazer D."/>
        </authorList>
    </citation>
    <scope>NUCLEOTIDE SEQUENCE [LARGE SCALE GENOMIC DNA]</scope>
    <source>
        <strain>ATCC 700388 / DSM 13276 / CCUG 48851 / CIP 106301 / E264</strain>
    </source>
</reference>
<reference key="2">
    <citation type="journal article" date="2010" name="J. Am. Chem. Soc.">
        <title>Induced biosynthesis of cryptic polyketide metabolites in a Burkholderia thailandensis quorum sensing mutant.</title>
        <authorList>
            <person name="Ishida K."/>
            <person name="Lincke T."/>
            <person name="Behnken S."/>
            <person name="Hertweck C."/>
        </authorList>
    </citation>
    <scope>FUNCTION</scope>
    <scope>DISRUPTION PHENOTYPE</scope>
    <source>
        <strain>ATCC 700388 / DSM 13276 / CCUG 48851 / CIP 106301 / E264</strain>
    </source>
</reference>
<protein>
    <recommendedName>
        <fullName evidence="5">Polyketide biosynthesis protein ThaF</fullName>
    </recommendedName>
    <domain>
        <recommendedName>
            <fullName>Malonyl CoA-acyl carrier protein transacylase</fullName>
            <shortName>MCT</shortName>
            <ecNumber evidence="1">2.3.1.39</ecNumber>
        </recommendedName>
    </domain>
</protein>
<dbReference type="EC" id="2.3.1.39" evidence="1"/>
<dbReference type="EMBL" id="CP000085">
    <property type="protein sequence ID" value="ABC34740.1"/>
    <property type="molecule type" value="Genomic_DNA"/>
</dbReference>
<dbReference type="RefSeq" id="WP_009897636.1">
    <property type="nucleotide sequence ID" value="NC_007650.1"/>
</dbReference>
<dbReference type="SMR" id="Q2T4N0"/>
<dbReference type="GeneID" id="45123053"/>
<dbReference type="KEGG" id="bte:BTH_II1675"/>
<dbReference type="HOGENOM" id="CLU_008708_0_0_4"/>
<dbReference type="Proteomes" id="UP000001930">
    <property type="component" value="Chromosome II"/>
</dbReference>
<dbReference type="GO" id="GO:0005829">
    <property type="term" value="C:cytosol"/>
    <property type="evidence" value="ECO:0007669"/>
    <property type="project" value="TreeGrafter"/>
</dbReference>
<dbReference type="GO" id="GO:0004314">
    <property type="term" value="F:[acyl-carrier-protein] S-malonyltransferase activity"/>
    <property type="evidence" value="ECO:0007669"/>
    <property type="project" value="UniProtKB-EC"/>
</dbReference>
<dbReference type="GO" id="GO:0017000">
    <property type="term" value="P:antibiotic biosynthetic process"/>
    <property type="evidence" value="ECO:0007669"/>
    <property type="project" value="UniProtKB-KW"/>
</dbReference>
<dbReference type="GO" id="GO:0006633">
    <property type="term" value="P:fatty acid biosynthetic process"/>
    <property type="evidence" value="ECO:0007669"/>
    <property type="project" value="TreeGrafter"/>
</dbReference>
<dbReference type="CDD" id="cd04742">
    <property type="entry name" value="NPD_FabD"/>
    <property type="match status" value="1"/>
</dbReference>
<dbReference type="Gene3D" id="3.20.20.70">
    <property type="entry name" value="Aldolase class I"/>
    <property type="match status" value="1"/>
</dbReference>
<dbReference type="Gene3D" id="3.30.70.250">
    <property type="entry name" value="Malonyl-CoA ACP transacylase, ACP-binding"/>
    <property type="match status" value="2"/>
</dbReference>
<dbReference type="Gene3D" id="3.40.366.10">
    <property type="entry name" value="Malonyl-Coenzyme A Acyl Carrier Protein, domain 2"/>
    <property type="match status" value="2"/>
</dbReference>
<dbReference type="InterPro" id="IPR001227">
    <property type="entry name" value="Ac_transferase_dom_sf"/>
</dbReference>
<dbReference type="InterPro" id="IPR014043">
    <property type="entry name" value="Acyl_transferase_dom"/>
</dbReference>
<dbReference type="InterPro" id="IPR016035">
    <property type="entry name" value="Acyl_Trfase/lysoPLipase"/>
</dbReference>
<dbReference type="InterPro" id="IPR013785">
    <property type="entry name" value="Aldolase_TIM"/>
</dbReference>
<dbReference type="InterPro" id="IPR049489">
    <property type="entry name" value="FabD-like_helical_ins"/>
</dbReference>
<dbReference type="InterPro" id="IPR050858">
    <property type="entry name" value="Mal-CoA-ACP_Trans/PKS_FabD"/>
</dbReference>
<dbReference type="InterPro" id="IPR004410">
    <property type="entry name" value="Malonyl_CoA-ACP_transAc_FabD"/>
</dbReference>
<dbReference type="InterPro" id="IPR016036">
    <property type="entry name" value="Malonyl_transacylase_ACP-bd"/>
</dbReference>
<dbReference type="InterPro" id="IPR014179">
    <property type="entry name" value="PfaD-like_TIM-barrel"/>
</dbReference>
<dbReference type="NCBIfam" id="TIGR00128">
    <property type="entry name" value="fabD"/>
    <property type="match status" value="1"/>
</dbReference>
<dbReference type="NCBIfam" id="TIGR02814">
    <property type="entry name" value="pfaD_fam"/>
    <property type="match status" value="1"/>
</dbReference>
<dbReference type="PANTHER" id="PTHR42681">
    <property type="entry name" value="MALONYL-COA-ACYL CARRIER PROTEIN TRANSACYLASE, MITOCHONDRIAL"/>
    <property type="match status" value="1"/>
</dbReference>
<dbReference type="PANTHER" id="PTHR42681:SF1">
    <property type="entry name" value="MALONYL-COA-ACYL CARRIER PROTEIN TRANSACYLASE, MITOCHONDRIAL"/>
    <property type="match status" value="1"/>
</dbReference>
<dbReference type="Pfam" id="PF00698">
    <property type="entry name" value="Acyl_transf_1"/>
    <property type="match status" value="2"/>
</dbReference>
<dbReference type="Pfam" id="PF21607">
    <property type="entry name" value="FabD_helical_ins"/>
    <property type="match status" value="1"/>
</dbReference>
<dbReference type="Pfam" id="PF03060">
    <property type="entry name" value="NMO"/>
    <property type="match status" value="1"/>
</dbReference>
<dbReference type="SMART" id="SM00827">
    <property type="entry name" value="PKS_AT"/>
    <property type="match status" value="2"/>
</dbReference>
<dbReference type="SUPFAM" id="SSF52151">
    <property type="entry name" value="FabD/lysophospholipase-like"/>
    <property type="match status" value="2"/>
</dbReference>
<dbReference type="SUPFAM" id="SSF51395">
    <property type="entry name" value="FMN-linked oxidoreductases"/>
    <property type="match status" value="1"/>
</dbReference>
<dbReference type="SUPFAM" id="SSF55048">
    <property type="entry name" value="Probable ACP-binding domain of malonyl-CoA ACP transacylase"/>
    <property type="match status" value="1"/>
</dbReference>
<feature type="chain" id="PRO_0000452504" description="Polyketide biosynthesis protein ThaF">
    <location>
        <begin position="1"/>
        <end position="1154"/>
    </location>
</feature>
<feature type="region of interest" description="Acyl transferase" evidence="1">
    <location>
        <begin position="330"/>
        <end position="714"/>
    </location>
</feature>
<feature type="region of interest" description="Disordered" evidence="2">
    <location>
        <begin position="627"/>
        <end position="689"/>
    </location>
</feature>
<feature type="compositionally biased region" description="Low complexity" evidence="2">
    <location>
        <begin position="641"/>
        <end position="672"/>
    </location>
</feature>
<feature type="compositionally biased region" description="Pro residues" evidence="2">
    <location>
        <begin position="673"/>
        <end position="689"/>
    </location>
</feature>
<sequence length="1154" mass="122962">MFSGQGSQYVGMGRALYESEPTFRHHVDRFDEVTRDKTGTSLVARLYGRDARAGEPFDDTHVTHPALFAVQYALARTLQARGAQPDIVLGSSLGDFVAAALAQVAPAQEIVAWLIDQAASMARACEPGFMLAVLGPASIYRGSDTLREFSDLVGVNYAEHFVIGGNRADLVRVEAALAREGVVFHRLPVRFGFHSRNVAPVVPWLHAREANLSCRAPTIPWASCTAGGIVEAPTARFLTRIAIDPLRFQEAARAIEQTGSPDTLHWVDLGPSGTLANFARRLGVPNDRLHVVMGPFGDDARALGRVSNLHASNARPAGAPAAPVSEGVSMHAFLFPGQGSQVKGMGAALFARFPDRMRLANEILGYDLAALCIENPDNRLGQTQFTQPAMYVVNALAYLARREDDAGAPAFVAGHSLGEYSALFAAGAFSFEDGLRLVKKRGELMSAARDGGMAAVLGLDEARVAEILALSDLRGIDIANLNAPTQIVIAGPADEIRRAQQWFEQGGCYAYVVLPVSGAFHSRMMRDAQREFERFIAPFDIGAPGIPVIANVTGRPYRGDEVRRGLVEQIASPVRWVDTIRYLSEQGVERFAEIGTGTVLTDLLRKILPQKAGASGAAARPQAGAASAVAASAPPRPTGMADAQPPAASPARAATAASTMPPASASASASAPAPAPAPAPAPAPAPAPAPALAPAFARAPASTSTNGIAPAARVEQLGCPEFKRRFGLKYAYVAGGMVHGIASVRMVVAMAKAGMKGYFGTGGLSLDAIRDAVRAIRGALPAGEPYGMNLLSGRLEEATVDLYLREGVTSVEAAAYMHVTPALARFKLAGLSVDRDGATVSAHKILAKVSRPEVATAFMSPIPEKFLERFVRDGVISDAQARAARAMPVADAVCVEADSGGHTDMGAMPALLPAIRRLCADIAGERGYRDKVPVGVAGGIGTPEAAAAAFVLGADFILTGSINQCTVESGISDVVKDMLQQINVHDTDYAPAGDMFELGAKVQVLRRGVFFPARANRLYELYKQYDSVDDLPDAVRRQLEDKYFGKSLAEVYADCERYYPADEIERARGNPKQKLALIFRWYFGFATRAALAGNEADKVNFQVQCGPALGAFNQWVRNTALENWRNRHVAEMAARILQDAADLLSRRYLSMVGR</sequence>
<comment type="function">
    <text evidence="1 6">Involved in production of the polyketide antibiotic thailandamide (Probable). Probably has an acyl transferase activity and could also have a flavin mononucleotide-dependent oxidoreductase activity (By similarity).</text>
</comment>
<comment type="catalytic activity">
    <reaction evidence="1">
        <text>holo-[ACP] + malonyl-CoA = malonyl-[ACP] + CoA</text>
        <dbReference type="Rhea" id="RHEA:41792"/>
        <dbReference type="Rhea" id="RHEA-COMP:9623"/>
        <dbReference type="Rhea" id="RHEA-COMP:9685"/>
        <dbReference type="ChEBI" id="CHEBI:57287"/>
        <dbReference type="ChEBI" id="CHEBI:57384"/>
        <dbReference type="ChEBI" id="CHEBI:64479"/>
        <dbReference type="ChEBI" id="CHEBI:78449"/>
        <dbReference type="EC" id="2.3.1.39"/>
    </reaction>
</comment>
<comment type="pathway">
    <text evidence="6">Antibiotic biosynthesis.</text>
</comment>
<comment type="subcellular location">
    <subcellularLocation>
        <location evidence="5">Cytoplasm</location>
    </subcellularLocation>
</comment>
<comment type="disruption phenotype">
    <text evidence="3">No production of thailandamide antibiotic.</text>
</comment>
<comment type="miscellaneous">
    <text evidence="5">Thailandamide is a polyketide that is toxic to human cell lines but also has antibacterial activity on E.coli, S.typhimurium and S.aureus. It probably acts on acetyl-CoA carboxylase in the fatty acid synthesis pathway, which is rarely found to be an antibiotic target. These data suggest it might be a good starting point for engineering of novel antibiotics.</text>
</comment>
<comment type="similarity">
    <text evidence="5">In the N-terminal section; belongs to the FabD family.</text>
</comment>